<name>LIX1_CHICK</name>
<keyword id="KW-1185">Reference proteome</keyword>
<gene>
    <name type="primary">LIX1</name>
</gene>
<reference key="1">
    <citation type="journal article" date="2001" name="Mech. Dev.">
        <title>Cloning and expression analysis of chicken Lix1, a founding member of a novel gene family.</title>
        <authorList>
            <person name="Swindell E.C."/>
            <person name="Moeller C."/>
            <person name="Thaller C."/>
            <person name="Eichele G."/>
        </authorList>
    </citation>
    <scope>NUCLEOTIDE SEQUENCE [MRNA]</scope>
    <scope>DEVELOPMENTAL STAGE</scope>
</reference>
<sequence>MDRTLESLQLVIARVLPHRDPALVFKDLNVVAILQEFWESKQKKKAVLPSEGIIVYESLSSLGPPFVSYVTLPGGSCFGNFQSCLSRAEARRDAAKVALINSLFNELPCRRITKEFIMESVQEAVSSTSGNLKDADDPSTSIGAYHYMLESNIGKTMLEFQELMIVFQLLHWNGSLKALRETKCSRQEVISYYSQCSLDEKMRSHMALDWIMKEQESPGIISQELQVALRELEEVRKAGHELRFYKEKKEILSLALSQIYSDEVTTSSWDNQMSLALHGYR</sequence>
<evidence type="ECO:0000269" key="1">
    <source>
    </source>
</evidence>
<evidence type="ECO:0000305" key="2"/>
<comment type="developmental stage">
    <text evidence="1">Transiently expressed in the nascent hindlimb bud between Hamburger-Hamilton stages 15 and 19. Also found in the basal plate of rhombomeres 3 and 5, in pharyngeal and in foregut mesenchyme and in all facial primordia except for the mandibular arches.</text>
</comment>
<comment type="similarity">
    <text evidence="2">Belongs to the LIX1 family.</text>
</comment>
<accession>Q8UVV7</accession>
<organism>
    <name type="scientific">Gallus gallus</name>
    <name type="common">Chicken</name>
    <dbReference type="NCBI Taxonomy" id="9031"/>
    <lineage>
        <taxon>Eukaryota</taxon>
        <taxon>Metazoa</taxon>
        <taxon>Chordata</taxon>
        <taxon>Craniata</taxon>
        <taxon>Vertebrata</taxon>
        <taxon>Euteleostomi</taxon>
        <taxon>Archelosauria</taxon>
        <taxon>Archosauria</taxon>
        <taxon>Dinosauria</taxon>
        <taxon>Saurischia</taxon>
        <taxon>Theropoda</taxon>
        <taxon>Coelurosauria</taxon>
        <taxon>Aves</taxon>
        <taxon>Neognathae</taxon>
        <taxon>Galloanserae</taxon>
        <taxon>Galliformes</taxon>
        <taxon>Phasianidae</taxon>
        <taxon>Phasianinae</taxon>
        <taxon>Gallus</taxon>
    </lineage>
</organism>
<dbReference type="EMBL" id="AF351203">
    <property type="protein sequence ID" value="AAL67189.1"/>
    <property type="molecule type" value="mRNA"/>
</dbReference>
<dbReference type="RefSeq" id="NP_989678.1">
    <property type="nucleotide sequence ID" value="NM_204347.2"/>
</dbReference>
<dbReference type="SMR" id="Q8UVV7"/>
<dbReference type="FunCoup" id="Q8UVV7">
    <property type="interactions" value="65"/>
</dbReference>
<dbReference type="STRING" id="9031.ENSGALP00000024632"/>
<dbReference type="PaxDb" id="9031-ENSGALP00000024632"/>
<dbReference type="Ensembl" id="ENSGALT00010028435.1">
    <property type="protein sequence ID" value="ENSGALP00010016308.1"/>
    <property type="gene ID" value="ENSGALG00010011893.1"/>
</dbReference>
<dbReference type="GeneID" id="374264"/>
<dbReference type="KEGG" id="gga:374264"/>
<dbReference type="CTD" id="167410"/>
<dbReference type="VEuPathDB" id="HostDB:geneid_374264"/>
<dbReference type="eggNOG" id="ENOG502QR91">
    <property type="taxonomic scope" value="Eukaryota"/>
</dbReference>
<dbReference type="GeneTree" id="ENSGT00390000005869"/>
<dbReference type="HOGENOM" id="CLU_065651_1_1_1"/>
<dbReference type="InParanoid" id="Q8UVV7"/>
<dbReference type="OMA" id="AMLQEFW"/>
<dbReference type="OrthoDB" id="6250996at2759"/>
<dbReference type="PhylomeDB" id="Q8UVV7"/>
<dbReference type="TreeFam" id="TF324035"/>
<dbReference type="PRO" id="PR:Q8UVV7"/>
<dbReference type="Proteomes" id="UP000000539">
    <property type="component" value="Chromosome Z"/>
</dbReference>
<dbReference type="Bgee" id="ENSGALG00000015290">
    <property type="expression patterns" value="Expressed in granulocyte and 6 other cell types or tissues"/>
</dbReference>
<dbReference type="GO" id="GO:0005737">
    <property type="term" value="C:cytoplasm"/>
    <property type="evidence" value="ECO:0000318"/>
    <property type="project" value="GO_Central"/>
</dbReference>
<dbReference type="GO" id="GO:0097352">
    <property type="term" value="P:autophagosome maturation"/>
    <property type="evidence" value="ECO:0000318"/>
    <property type="project" value="GO_Central"/>
</dbReference>
<dbReference type="InterPro" id="IPR051436">
    <property type="entry name" value="Autophagy-related_EPG5"/>
</dbReference>
<dbReference type="InterPro" id="IPR029270">
    <property type="entry name" value="LIX1"/>
</dbReference>
<dbReference type="PANTHER" id="PTHR31139">
    <property type="entry name" value="ECTOPIC P GRANULES PROTEIN 5 HOMOLOG"/>
    <property type="match status" value="1"/>
</dbReference>
<dbReference type="PANTHER" id="PTHR31139:SF5">
    <property type="entry name" value="PROTEIN LIMB EXPRESSION 1 HOMOLOG"/>
    <property type="match status" value="1"/>
</dbReference>
<dbReference type="Pfam" id="PF14954">
    <property type="entry name" value="LIX1"/>
    <property type="match status" value="1"/>
</dbReference>
<feature type="chain" id="PRO_0000232871" description="Protein limb expression 1">
    <location>
        <begin position="1"/>
        <end position="281"/>
    </location>
</feature>
<protein>
    <recommendedName>
        <fullName>Protein limb expression 1</fullName>
    </recommendedName>
</protein>
<proteinExistence type="evidence at transcript level"/>